<proteinExistence type="inferred from homology"/>
<sequence length="370" mass="42585">MEILRVEPTPSPNTMKIVLSNKREDNKSNTFTYIEEQQPQFINDLLAIDGVKSIFYVMDFLAIDKEPKSDWEVVLPQITSTLNNESFIDSSHKPDEHYGEIKAEALMFKGIPYQIKLTTTSDESRKQLPDYFVESMLKAQKDGDNVVFLRKWQDLGVRYGDLEEVMNEVYEEIIALYPSEKLASLVQTALETDIVIPQQQYHHVTLNEYKEATDWKDKLRMLKEFPTPTLQDIDLLDEALQEDKAPLRRQAIVLIGMIEEKEILPYLYKGLRDKNPAVRRTAGDCLSDLGFKEALPEMENALNDPQKIVRWRAAMFLFDEGGPEQLPSLKSHANDPAYEVKLQIEMAISRIENGDEALGSVWKQIANRNK</sequence>
<gene>
    <name type="primary">cvfC</name>
    <name type="ordered locus">SH1477</name>
</gene>
<name>CVFC_STAHJ</name>
<comment type="similarity">
    <text evidence="1">Belongs to the CvfC family.</text>
</comment>
<evidence type="ECO:0000305" key="1"/>
<feature type="chain" id="PRO_0000282311" description="Conserved virulence factor C">
    <location>
        <begin position="1"/>
        <end position="370"/>
    </location>
</feature>
<dbReference type="EMBL" id="AP006716">
    <property type="protein sequence ID" value="BAE04786.1"/>
    <property type="molecule type" value="Genomic_DNA"/>
</dbReference>
<dbReference type="RefSeq" id="WP_011275772.1">
    <property type="nucleotide sequence ID" value="NC_007168.1"/>
</dbReference>
<dbReference type="SMR" id="Q4L6D9"/>
<dbReference type="KEGG" id="sha:SH1477"/>
<dbReference type="eggNOG" id="COG1413">
    <property type="taxonomic scope" value="Bacteria"/>
</dbReference>
<dbReference type="HOGENOM" id="CLU_733295_0_0_9"/>
<dbReference type="OrthoDB" id="420201at2"/>
<dbReference type="Proteomes" id="UP000000543">
    <property type="component" value="Chromosome"/>
</dbReference>
<dbReference type="GO" id="GO:0016491">
    <property type="term" value="F:oxidoreductase activity"/>
    <property type="evidence" value="ECO:0007669"/>
    <property type="project" value="TreeGrafter"/>
</dbReference>
<dbReference type="Gene3D" id="1.25.10.10">
    <property type="entry name" value="Leucine-rich Repeat Variant"/>
    <property type="match status" value="1"/>
</dbReference>
<dbReference type="Gene3D" id="3.30.1370.70">
    <property type="entry name" value="Scaffold protein Nfu/NifU, N-terminal domain"/>
    <property type="match status" value="1"/>
</dbReference>
<dbReference type="InterPro" id="IPR011989">
    <property type="entry name" value="ARM-like"/>
</dbReference>
<dbReference type="InterPro" id="IPR016024">
    <property type="entry name" value="ARM-type_fold"/>
</dbReference>
<dbReference type="InterPro" id="IPR014824">
    <property type="entry name" value="Nfu/NifU_N"/>
</dbReference>
<dbReference type="InterPro" id="IPR036498">
    <property type="entry name" value="Nfu/NifU_N_sf"/>
</dbReference>
<dbReference type="InterPro" id="IPR004155">
    <property type="entry name" value="PBS_lyase_HEAT"/>
</dbReference>
<dbReference type="InterPro" id="IPR025989">
    <property type="entry name" value="Virulence_F_dom"/>
</dbReference>
<dbReference type="PANTHER" id="PTHR12697:SF37">
    <property type="entry name" value="CONSERVED VIRULENCE FACTOR C"/>
    <property type="match status" value="1"/>
</dbReference>
<dbReference type="PANTHER" id="PTHR12697">
    <property type="entry name" value="PBS LYASE HEAT-LIKE PROTEIN"/>
    <property type="match status" value="1"/>
</dbReference>
<dbReference type="Pfam" id="PF13646">
    <property type="entry name" value="HEAT_2"/>
    <property type="match status" value="1"/>
</dbReference>
<dbReference type="Pfam" id="PF08712">
    <property type="entry name" value="Nfu_N"/>
    <property type="match status" value="1"/>
</dbReference>
<dbReference type="Pfam" id="PF13769">
    <property type="entry name" value="Virulence_fact"/>
    <property type="match status" value="1"/>
</dbReference>
<dbReference type="SMART" id="SM00567">
    <property type="entry name" value="EZ_HEAT"/>
    <property type="match status" value="3"/>
</dbReference>
<dbReference type="SMART" id="SM00932">
    <property type="entry name" value="Nfu_N"/>
    <property type="match status" value="1"/>
</dbReference>
<dbReference type="SUPFAM" id="SSF48371">
    <property type="entry name" value="ARM repeat"/>
    <property type="match status" value="1"/>
</dbReference>
<dbReference type="SUPFAM" id="SSF110836">
    <property type="entry name" value="Hypothetical protein SAV1430"/>
    <property type="match status" value="1"/>
</dbReference>
<accession>Q4L6D9</accession>
<reference key="1">
    <citation type="journal article" date="2005" name="J. Bacteriol.">
        <title>Whole-genome sequencing of Staphylococcus haemolyticus uncovers the extreme plasticity of its genome and the evolution of human-colonizing staphylococcal species.</title>
        <authorList>
            <person name="Takeuchi F."/>
            <person name="Watanabe S."/>
            <person name="Baba T."/>
            <person name="Yuzawa H."/>
            <person name="Ito T."/>
            <person name="Morimoto Y."/>
            <person name="Kuroda M."/>
            <person name="Cui L."/>
            <person name="Takahashi M."/>
            <person name="Ankai A."/>
            <person name="Baba S."/>
            <person name="Fukui S."/>
            <person name="Lee J.C."/>
            <person name="Hiramatsu K."/>
        </authorList>
    </citation>
    <scope>NUCLEOTIDE SEQUENCE [LARGE SCALE GENOMIC DNA]</scope>
    <source>
        <strain>JCSC1435</strain>
    </source>
</reference>
<organism>
    <name type="scientific">Staphylococcus haemolyticus (strain JCSC1435)</name>
    <dbReference type="NCBI Taxonomy" id="279808"/>
    <lineage>
        <taxon>Bacteria</taxon>
        <taxon>Bacillati</taxon>
        <taxon>Bacillota</taxon>
        <taxon>Bacilli</taxon>
        <taxon>Bacillales</taxon>
        <taxon>Staphylococcaceae</taxon>
        <taxon>Staphylococcus</taxon>
    </lineage>
</organism>
<protein>
    <recommendedName>
        <fullName>Conserved virulence factor C</fullName>
    </recommendedName>
</protein>